<evidence type="ECO:0000255" key="1">
    <source>
        <dbReference type="HAMAP-Rule" id="MF_00252"/>
    </source>
</evidence>
<feature type="chain" id="PRO_1000101144" description="Lysine--tRNA ligase">
    <location>
        <begin position="1"/>
        <end position="505"/>
    </location>
</feature>
<feature type="binding site" evidence="1">
    <location>
        <position position="415"/>
    </location>
    <ligand>
        <name>Mg(2+)</name>
        <dbReference type="ChEBI" id="CHEBI:18420"/>
        <label>1</label>
    </ligand>
</feature>
<feature type="binding site" evidence="1">
    <location>
        <position position="422"/>
    </location>
    <ligand>
        <name>Mg(2+)</name>
        <dbReference type="ChEBI" id="CHEBI:18420"/>
        <label>1</label>
    </ligand>
</feature>
<feature type="binding site" evidence="1">
    <location>
        <position position="422"/>
    </location>
    <ligand>
        <name>Mg(2+)</name>
        <dbReference type="ChEBI" id="CHEBI:18420"/>
        <label>2</label>
    </ligand>
</feature>
<reference key="1">
    <citation type="journal article" date="2011" name="J. Bacteriol.">
        <title>Comparative genomics of 28 Salmonella enterica isolates: evidence for CRISPR-mediated adaptive sublineage evolution.</title>
        <authorList>
            <person name="Fricke W.F."/>
            <person name="Mammel M.K."/>
            <person name="McDermott P.F."/>
            <person name="Tartera C."/>
            <person name="White D.G."/>
            <person name="Leclerc J.E."/>
            <person name="Ravel J."/>
            <person name="Cebula T.A."/>
        </authorList>
    </citation>
    <scope>NUCLEOTIDE SEQUENCE [LARGE SCALE GENOMIC DNA]</scope>
    <source>
        <strain>SL476</strain>
    </source>
</reference>
<organism>
    <name type="scientific">Salmonella heidelberg (strain SL476)</name>
    <dbReference type="NCBI Taxonomy" id="454169"/>
    <lineage>
        <taxon>Bacteria</taxon>
        <taxon>Pseudomonadati</taxon>
        <taxon>Pseudomonadota</taxon>
        <taxon>Gammaproteobacteria</taxon>
        <taxon>Enterobacterales</taxon>
        <taxon>Enterobacteriaceae</taxon>
        <taxon>Salmonella</taxon>
    </lineage>
</organism>
<accession>B4TGW0</accession>
<gene>
    <name evidence="1" type="primary">lysS</name>
    <name type="ordered locus">SeHA_C3271</name>
</gene>
<name>SYK_SALHS</name>
<sequence length="505" mass="57575">MSEQNAQGADEVVDLNNEMKARREKLAALREQGIPFPNDFRRDRTSDQLHAEFDAKEAEELEALNIEVSVAGRMMTRRIMGKASFVTLQDVGGRIQLYVARDDLPEGVYNEQFKKWDLGDILGAKGKLFKTKTGELSIHCTELRLLTKALRPLPDKFHGLQDQEARYRQRYLDLISNDESRNTFKTRSKILAGIRQFMVARGFMEVETPMMQVIPGGASARPFITHHNALDLDMYLRIAPELYLKRLVVGGFERVFEINRNFRNEGISVRHNPEFTMMELYMAYADYKDLIELTESLFRTLAQDVLGTTQVPYGDEVFDFGKPFEKLTMREAIKKYRPETDMADLDNFDSAKAIAESIGIHVEKSWGLGRIVTEIFDEVAEAHLIQPTFITEYPAEVSPLARRNDVNPEITDRFEFFIGGREIGNGFSELNDAEDQAQRFLDQVNAKAAGDDEAMFYDEDYVTALEHGLPPTAGLGIGIDRMVMLFTNSHTIRDVILFPAMRPVK</sequence>
<keyword id="KW-0030">Aminoacyl-tRNA synthetase</keyword>
<keyword id="KW-0067">ATP-binding</keyword>
<keyword id="KW-0963">Cytoplasm</keyword>
<keyword id="KW-0436">Ligase</keyword>
<keyword id="KW-0460">Magnesium</keyword>
<keyword id="KW-0479">Metal-binding</keyword>
<keyword id="KW-0547">Nucleotide-binding</keyword>
<keyword id="KW-0648">Protein biosynthesis</keyword>
<dbReference type="EC" id="6.1.1.6" evidence="1"/>
<dbReference type="EMBL" id="CP001120">
    <property type="protein sequence ID" value="ACF68934.1"/>
    <property type="molecule type" value="Genomic_DNA"/>
</dbReference>
<dbReference type="RefSeq" id="WP_000003339.1">
    <property type="nucleotide sequence ID" value="NC_011083.1"/>
</dbReference>
<dbReference type="SMR" id="B4TGW0"/>
<dbReference type="KEGG" id="seh:SeHA_C3271"/>
<dbReference type="HOGENOM" id="CLU_008255_6_0_6"/>
<dbReference type="Proteomes" id="UP000001866">
    <property type="component" value="Chromosome"/>
</dbReference>
<dbReference type="GO" id="GO:0005829">
    <property type="term" value="C:cytosol"/>
    <property type="evidence" value="ECO:0007669"/>
    <property type="project" value="TreeGrafter"/>
</dbReference>
<dbReference type="GO" id="GO:0005524">
    <property type="term" value="F:ATP binding"/>
    <property type="evidence" value="ECO:0007669"/>
    <property type="project" value="UniProtKB-UniRule"/>
</dbReference>
<dbReference type="GO" id="GO:0004824">
    <property type="term" value="F:lysine-tRNA ligase activity"/>
    <property type="evidence" value="ECO:0007669"/>
    <property type="project" value="UniProtKB-UniRule"/>
</dbReference>
<dbReference type="GO" id="GO:0000287">
    <property type="term" value="F:magnesium ion binding"/>
    <property type="evidence" value="ECO:0007669"/>
    <property type="project" value="UniProtKB-UniRule"/>
</dbReference>
<dbReference type="GO" id="GO:0000049">
    <property type="term" value="F:tRNA binding"/>
    <property type="evidence" value="ECO:0007669"/>
    <property type="project" value="TreeGrafter"/>
</dbReference>
<dbReference type="GO" id="GO:0006430">
    <property type="term" value="P:lysyl-tRNA aminoacylation"/>
    <property type="evidence" value="ECO:0007669"/>
    <property type="project" value="UniProtKB-UniRule"/>
</dbReference>
<dbReference type="CDD" id="cd00775">
    <property type="entry name" value="LysRS_core"/>
    <property type="match status" value="1"/>
</dbReference>
<dbReference type="CDD" id="cd04322">
    <property type="entry name" value="LysRS_N"/>
    <property type="match status" value="1"/>
</dbReference>
<dbReference type="FunFam" id="2.40.50.140:FF:000024">
    <property type="entry name" value="Lysine--tRNA ligase"/>
    <property type="match status" value="1"/>
</dbReference>
<dbReference type="FunFam" id="3.30.930.10:FF:000001">
    <property type="entry name" value="Lysine--tRNA ligase"/>
    <property type="match status" value="1"/>
</dbReference>
<dbReference type="Gene3D" id="3.30.930.10">
    <property type="entry name" value="Bira Bifunctional Protein, Domain 2"/>
    <property type="match status" value="1"/>
</dbReference>
<dbReference type="Gene3D" id="2.40.50.140">
    <property type="entry name" value="Nucleic acid-binding proteins"/>
    <property type="match status" value="1"/>
</dbReference>
<dbReference type="HAMAP" id="MF_00252">
    <property type="entry name" value="Lys_tRNA_synth_class2"/>
    <property type="match status" value="1"/>
</dbReference>
<dbReference type="InterPro" id="IPR004364">
    <property type="entry name" value="Aa-tRNA-synt_II"/>
</dbReference>
<dbReference type="InterPro" id="IPR006195">
    <property type="entry name" value="aa-tRNA-synth_II"/>
</dbReference>
<dbReference type="InterPro" id="IPR045864">
    <property type="entry name" value="aa-tRNA-synth_II/BPL/LPL"/>
</dbReference>
<dbReference type="InterPro" id="IPR002313">
    <property type="entry name" value="Lys-tRNA-ligase_II"/>
</dbReference>
<dbReference type="InterPro" id="IPR034762">
    <property type="entry name" value="Lys-tRNA-ligase_II_bac/euk"/>
</dbReference>
<dbReference type="InterPro" id="IPR044136">
    <property type="entry name" value="Lys-tRNA-ligase_II_N"/>
</dbReference>
<dbReference type="InterPro" id="IPR018149">
    <property type="entry name" value="Lys-tRNA-synth_II_C"/>
</dbReference>
<dbReference type="InterPro" id="IPR012340">
    <property type="entry name" value="NA-bd_OB-fold"/>
</dbReference>
<dbReference type="InterPro" id="IPR004365">
    <property type="entry name" value="NA-bd_OB_tRNA"/>
</dbReference>
<dbReference type="NCBIfam" id="TIGR00499">
    <property type="entry name" value="lysS_bact"/>
    <property type="match status" value="1"/>
</dbReference>
<dbReference type="NCBIfam" id="NF001756">
    <property type="entry name" value="PRK00484.1"/>
    <property type="match status" value="1"/>
</dbReference>
<dbReference type="NCBIfam" id="NF009101">
    <property type="entry name" value="PRK12445.1"/>
    <property type="match status" value="1"/>
</dbReference>
<dbReference type="PANTHER" id="PTHR42918:SF15">
    <property type="entry name" value="LYSINE--TRNA LIGASE, CHLOROPLASTIC_MITOCHONDRIAL"/>
    <property type="match status" value="1"/>
</dbReference>
<dbReference type="PANTHER" id="PTHR42918">
    <property type="entry name" value="LYSYL-TRNA SYNTHETASE"/>
    <property type="match status" value="1"/>
</dbReference>
<dbReference type="Pfam" id="PF00152">
    <property type="entry name" value="tRNA-synt_2"/>
    <property type="match status" value="1"/>
</dbReference>
<dbReference type="Pfam" id="PF01336">
    <property type="entry name" value="tRNA_anti-codon"/>
    <property type="match status" value="1"/>
</dbReference>
<dbReference type="PIRSF" id="PIRSF039101">
    <property type="entry name" value="LysRS2"/>
    <property type="match status" value="1"/>
</dbReference>
<dbReference type="PRINTS" id="PR00982">
    <property type="entry name" value="TRNASYNTHLYS"/>
</dbReference>
<dbReference type="SUPFAM" id="SSF55681">
    <property type="entry name" value="Class II aaRS and biotin synthetases"/>
    <property type="match status" value="1"/>
</dbReference>
<dbReference type="SUPFAM" id="SSF50249">
    <property type="entry name" value="Nucleic acid-binding proteins"/>
    <property type="match status" value="1"/>
</dbReference>
<dbReference type="PROSITE" id="PS50862">
    <property type="entry name" value="AA_TRNA_LIGASE_II"/>
    <property type="match status" value="1"/>
</dbReference>
<proteinExistence type="inferred from homology"/>
<comment type="catalytic activity">
    <reaction evidence="1">
        <text>tRNA(Lys) + L-lysine + ATP = L-lysyl-tRNA(Lys) + AMP + diphosphate</text>
        <dbReference type="Rhea" id="RHEA:20792"/>
        <dbReference type="Rhea" id="RHEA-COMP:9696"/>
        <dbReference type="Rhea" id="RHEA-COMP:9697"/>
        <dbReference type="ChEBI" id="CHEBI:30616"/>
        <dbReference type="ChEBI" id="CHEBI:32551"/>
        <dbReference type="ChEBI" id="CHEBI:33019"/>
        <dbReference type="ChEBI" id="CHEBI:78442"/>
        <dbReference type="ChEBI" id="CHEBI:78529"/>
        <dbReference type="ChEBI" id="CHEBI:456215"/>
        <dbReference type="EC" id="6.1.1.6"/>
    </reaction>
</comment>
<comment type="cofactor">
    <cofactor evidence="1">
        <name>Mg(2+)</name>
        <dbReference type="ChEBI" id="CHEBI:18420"/>
    </cofactor>
    <text evidence="1">Binds 3 Mg(2+) ions per subunit.</text>
</comment>
<comment type="subunit">
    <text evidence="1">Homodimer.</text>
</comment>
<comment type="subcellular location">
    <subcellularLocation>
        <location evidence="1">Cytoplasm</location>
    </subcellularLocation>
</comment>
<comment type="similarity">
    <text evidence="1">Belongs to the class-II aminoacyl-tRNA synthetase family.</text>
</comment>
<protein>
    <recommendedName>
        <fullName evidence="1">Lysine--tRNA ligase</fullName>
        <ecNumber evidence="1">6.1.1.6</ecNumber>
    </recommendedName>
    <alternativeName>
        <fullName evidence="1">Lysyl-tRNA synthetase</fullName>
        <shortName evidence="1">LysRS</shortName>
    </alternativeName>
</protein>